<evidence type="ECO:0000255" key="1">
    <source>
        <dbReference type="HAMAP-Rule" id="MF_01398"/>
    </source>
</evidence>
<evidence type="ECO:0000256" key="2">
    <source>
        <dbReference type="SAM" id="MobiDB-lite"/>
    </source>
</evidence>
<sequence length="208" mass="21896">MFVSTAFAQTATESQPASTAGEHGAADAVHTETGVAHDAGHGSGVFPPFDSTHYASQVLWLAITFGLFYLFLSRVVLPRIGGVIETRRDRIAQDLEQAARLKQDADNAIAAYEQELAQARSKAASIAEAAREKGKGEADAERASAEAVLESKLKEAEERIAAIKAKAMSDVGNIAEETTATIVEQLLGLTADKASVSEAVKAIRASNA</sequence>
<keyword id="KW-0066">ATP synthesis</keyword>
<keyword id="KW-0997">Cell inner membrane</keyword>
<keyword id="KW-1003">Cell membrane</keyword>
<keyword id="KW-0138">CF(0)</keyword>
<keyword id="KW-0375">Hydrogen ion transport</keyword>
<keyword id="KW-0406">Ion transport</keyword>
<keyword id="KW-0472">Membrane</keyword>
<keyword id="KW-1185">Reference proteome</keyword>
<keyword id="KW-0812">Transmembrane</keyword>
<keyword id="KW-1133">Transmembrane helix</keyword>
<keyword id="KW-0813">Transport</keyword>
<gene>
    <name evidence="1" type="primary">atpF1</name>
    <name type="ordered locus">BAB1_0413</name>
</gene>
<protein>
    <recommendedName>
        <fullName evidence="1">ATP synthase subunit b 1</fullName>
    </recommendedName>
    <alternativeName>
        <fullName evidence="1">ATP synthase F(0) sector subunit b 1</fullName>
    </alternativeName>
    <alternativeName>
        <fullName evidence="1">ATPase subunit I 1</fullName>
    </alternativeName>
    <alternativeName>
        <fullName evidence="1">F-type ATPase subunit b 1</fullName>
        <shortName evidence="1">F-ATPase subunit b 1</shortName>
    </alternativeName>
</protein>
<accession>Q2YMC5</accession>
<dbReference type="EMBL" id="AM040264">
    <property type="protein sequence ID" value="CAJ10369.1"/>
    <property type="molecule type" value="Genomic_DNA"/>
</dbReference>
<dbReference type="RefSeq" id="WP_002963545.1">
    <property type="nucleotide sequence ID" value="NZ_KN046823.1"/>
</dbReference>
<dbReference type="SMR" id="Q2YMC5"/>
<dbReference type="STRING" id="359391.BAB1_0413"/>
<dbReference type="KEGG" id="bmf:BAB1_0413"/>
<dbReference type="PATRIC" id="fig|359391.11.peg.2457"/>
<dbReference type="HOGENOM" id="CLU_079215_1_2_5"/>
<dbReference type="PhylomeDB" id="Q2YMC5"/>
<dbReference type="Proteomes" id="UP000002719">
    <property type="component" value="Chromosome I"/>
</dbReference>
<dbReference type="GO" id="GO:0005886">
    <property type="term" value="C:plasma membrane"/>
    <property type="evidence" value="ECO:0007669"/>
    <property type="project" value="UniProtKB-SubCell"/>
</dbReference>
<dbReference type="GO" id="GO:0045259">
    <property type="term" value="C:proton-transporting ATP synthase complex"/>
    <property type="evidence" value="ECO:0007669"/>
    <property type="project" value="UniProtKB-KW"/>
</dbReference>
<dbReference type="GO" id="GO:0046933">
    <property type="term" value="F:proton-transporting ATP synthase activity, rotational mechanism"/>
    <property type="evidence" value="ECO:0007669"/>
    <property type="project" value="UniProtKB-UniRule"/>
</dbReference>
<dbReference type="GO" id="GO:0046961">
    <property type="term" value="F:proton-transporting ATPase activity, rotational mechanism"/>
    <property type="evidence" value="ECO:0007669"/>
    <property type="project" value="TreeGrafter"/>
</dbReference>
<dbReference type="CDD" id="cd06503">
    <property type="entry name" value="ATP-synt_Fo_b"/>
    <property type="match status" value="1"/>
</dbReference>
<dbReference type="Gene3D" id="6.10.250.1580">
    <property type="match status" value="1"/>
</dbReference>
<dbReference type="HAMAP" id="MF_01398">
    <property type="entry name" value="ATP_synth_b_bprime"/>
    <property type="match status" value="1"/>
</dbReference>
<dbReference type="InterPro" id="IPR002146">
    <property type="entry name" value="ATP_synth_b/b'su_bac/chlpt"/>
</dbReference>
<dbReference type="InterPro" id="IPR050059">
    <property type="entry name" value="ATP_synthase_B_chain"/>
</dbReference>
<dbReference type="NCBIfam" id="NF006612">
    <property type="entry name" value="PRK09174.1"/>
    <property type="match status" value="1"/>
</dbReference>
<dbReference type="PANTHER" id="PTHR33445:SF1">
    <property type="entry name" value="ATP SYNTHASE SUBUNIT B"/>
    <property type="match status" value="1"/>
</dbReference>
<dbReference type="PANTHER" id="PTHR33445">
    <property type="entry name" value="ATP SYNTHASE SUBUNIT B', CHLOROPLASTIC"/>
    <property type="match status" value="1"/>
</dbReference>
<dbReference type="Pfam" id="PF00430">
    <property type="entry name" value="ATP-synt_B"/>
    <property type="match status" value="1"/>
</dbReference>
<name>ATPF1_BRUA2</name>
<comment type="function">
    <text evidence="1">F(1)F(0) ATP synthase produces ATP from ADP in the presence of a proton or sodium gradient. F-type ATPases consist of two structural domains, F(1) containing the extramembraneous catalytic core and F(0) containing the membrane proton channel, linked together by a central stalk and a peripheral stalk. During catalysis, ATP synthesis in the catalytic domain of F(1) is coupled via a rotary mechanism of the central stalk subunits to proton translocation.</text>
</comment>
<comment type="function">
    <text evidence="1">Component of the F(0) channel, it forms part of the peripheral stalk, linking F(1) to F(0).</text>
</comment>
<comment type="subunit">
    <text evidence="1">F-type ATPases have 2 components, F(1) - the catalytic core - and F(0) - the membrane proton channel. F(1) has five subunits: alpha(3), beta(3), gamma(1), delta(1), epsilon(1). F(0) has three main subunits: a(1), b(2) and c(10-14). The alpha and beta chains form an alternating ring which encloses part of the gamma chain. F(1) is attached to F(0) by a central stalk formed by the gamma and epsilon chains, while a peripheral stalk is formed by the delta and b chains.</text>
</comment>
<comment type="subcellular location">
    <subcellularLocation>
        <location evidence="1">Cell inner membrane</location>
        <topology evidence="1">Single-pass membrane protein</topology>
    </subcellularLocation>
</comment>
<comment type="similarity">
    <text evidence="1">Belongs to the ATPase B chain family.</text>
</comment>
<feature type="chain" id="PRO_0000368365" description="ATP synthase subunit b 1">
    <location>
        <begin position="1"/>
        <end position="208"/>
    </location>
</feature>
<feature type="transmembrane region" description="Helical" evidence="1">
    <location>
        <begin position="56"/>
        <end position="78"/>
    </location>
</feature>
<feature type="region of interest" description="Disordered" evidence="2">
    <location>
        <begin position="1"/>
        <end position="26"/>
    </location>
</feature>
<feature type="compositionally biased region" description="Polar residues" evidence="2">
    <location>
        <begin position="1"/>
        <end position="18"/>
    </location>
</feature>
<organism>
    <name type="scientific">Brucella abortus (strain 2308)</name>
    <dbReference type="NCBI Taxonomy" id="359391"/>
    <lineage>
        <taxon>Bacteria</taxon>
        <taxon>Pseudomonadati</taxon>
        <taxon>Pseudomonadota</taxon>
        <taxon>Alphaproteobacteria</taxon>
        <taxon>Hyphomicrobiales</taxon>
        <taxon>Brucellaceae</taxon>
        <taxon>Brucella/Ochrobactrum group</taxon>
        <taxon>Brucella</taxon>
    </lineage>
</organism>
<proteinExistence type="inferred from homology"/>
<reference key="1">
    <citation type="journal article" date="2005" name="Infect. Immun.">
        <title>Whole-genome analyses of speciation events in pathogenic Brucellae.</title>
        <authorList>
            <person name="Chain P.S."/>
            <person name="Comerci D.J."/>
            <person name="Tolmasky M.E."/>
            <person name="Larimer F.W."/>
            <person name="Malfatti S.A."/>
            <person name="Vergez L.M."/>
            <person name="Aguero F."/>
            <person name="Land M.L."/>
            <person name="Ugalde R.A."/>
            <person name="Garcia E."/>
        </authorList>
    </citation>
    <scope>NUCLEOTIDE SEQUENCE [LARGE SCALE GENOMIC DNA]</scope>
    <source>
        <strain>2308</strain>
    </source>
</reference>